<dbReference type="EC" id="3.1.1.4"/>
<dbReference type="EMBL" id="Y00377">
    <property type="protein sequence ID" value="CAA68449.1"/>
    <property type="molecule type" value="mRNA"/>
</dbReference>
<dbReference type="PIR" id="A27099">
    <property type="entry name" value="A27099"/>
</dbReference>
<dbReference type="SMR" id="P19000"/>
<dbReference type="Proteomes" id="UP000694406">
    <property type="component" value="Unplaced"/>
</dbReference>
<dbReference type="GO" id="GO:0005576">
    <property type="term" value="C:extracellular region"/>
    <property type="evidence" value="ECO:0007669"/>
    <property type="project" value="UniProtKB-SubCell"/>
</dbReference>
<dbReference type="GO" id="GO:0005509">
    <property type="term" value="F:calcium ion binding"/>
    <property type="evidence" value="ECO:0007669"/>
    <property type="project" value="InterPro"/>
</dbReference>
<dbReference type="GO" id="GO:0047498">
    <property type="term" value="F:calcium-dependent phospholipase A2 activity"/>
    <property type="evidence" value="ECO:0007669"/>
    <property type="project" value="TreeGrafter"/>
</dbReference>
<dbReference type="GO" id="GO:0005543">
    <property type="term" value="F:phospholipid binding"/>
    <property type="evidence" value="ECO:0007669"/>
    <property type="project" value="TreeGrafter"/>
</dbReference>
<dbReference type="GO" id="GO:0050482">
    <property type="term" value="P:arachidonate secretion"/>
    <property type="evidence" value="ECO:0007669"/>
    <property type="project" value="InterPro"/>
</dbReference>
<dbReference type="GO" id="GO:0016042">
    <property type="term" value="P:lipid catabolic process"/>
    <property type="evidence" value="ECO:0007669"/>
    <property type="project" value="UniProtKB-KW"/>
</dbReference>
<dbReference type="GO" id="GO:0006644">
    <property type="term" value="P:phospholipid metabolic process"/>
    <property type="evidence" value="ECO:0007669"/>
    <property type="project" value="InterPro"/>
</dbReference>
<dbReference type="CDD" id="cd00125">
    <property type="entry name" value="PLA2c"/>
    <property type="match status" value="1"/>
</dbReference>
<dbReference type="FunFam" id="1.20.90.10:FF:000007">
    <property type="entry name" value="Acidic phospholipase A2"/>
    <property type="match status" value="1"/>
</dbReference>
<dbReference type="Gene3D" id="1.20.90.10">
    <property type="entry name" value="Phospholipase A2 domain"/>
    <property type="match status" value="1"/>
</dbReference>
<dbReference type="InterPro" id="IPR001211">
    <property type="entry name" value="PLipase_A2"/>
</dbReference>
<dbReference type="InterPro" id="IPR033112">
    <property type="entry name" value="PLipase_A2_Asp_AS"/>
</dbReference>
<dbReference type="InterPro" id="IPR016090">
    <property type="entry name" value="PLipase_A2_dom"/>
</dbReference>
<dbReference type="InterPro" id="IPR036444">
    <property type="entry name" value="PLipase_A2_dom_sf"/>
</dbReference>
<dbReference type="InterPro" id="IPR033113">
    <property type="entry name" value="PLipase_A2_His_AS"/>
</dbReference>
<dbReference type="PANTHER" id="PTHR11716:SF51">
    <property type="entry name" value="PHOSPHOLIPASE A2"/>
    <property type="match status" value="1"/>
</dbReference>
<dbReference type="PANTHER" id="PTHR11716">
    <property type="entry name" value="PHOSPHOLIPASE A2 FAMILY MEMBER"/>
    <property type="match status" value="1"/>
</dbReference>
<dbReference type="Pfam" id="PF00068">
    <property type="entry name" value="Phospholip_A2_1"/>
    <property type="match status" value="1"/>
</dbReference>
<dbReference type="PRINTS" id="PR00389">
    <property type="entry name" value="PHPHLIPASEA2"/>
</dbReference>
<dbReference type="SMART" id="SM00085">
    <property type="entry name" value="PA2c"/>
    <property type="match status" value="1"/>
</dbReference>
<dbReference type="SUPFAM" id="SSF48619">
    <property type="entry name" value="Phospholipase A2, PLA2"/>
    <property type="match status" value="1"/>
</dbReference>
<dbReference type="PROSITE" id="PS00119">
    <property type="entry name" value="PA2_ASP"/>
    <property type="match status" value="1"/>
</dbReference>
<dbReference type="PROSITE" id="PS00118">
    <property type="entry name" value="PA2_HIS"/>
    <property type="match status" value="1"/>
</dbReference>
<keyword id="KW-0106">Calcium</keyword>
<keyword id="KW-1015">Disulfide bond</keyword>
<keyword id="KW-0378">Hydrolase</keyword>
<keyword id="KW-0442">Lipid degradation</keyword>
<keyword id="KW-0443">Lipid metabolism</keyword>
<keyword id="KW-0479">Metal-binding</keyword>
<keyword id="KW-1185">Reference proteome</keyword>
<keyword id="KW-0964">Secreted</keyword>
<keyword id="KW-0732">Signal</keyword>
<comment type="function">
    <text>PLA2 catalyzes the calcium-dependent hydrolysis of the 2-acyl groups in 3-sn-phosphoglycerides.</text>
</comment>
<comment type="catalytic activity">
    <reaction evidence="3 4">
        <text>a 1,2-diacyl-sn-glycero-3-phosphocholine + H2O = a 1-acyl-sn-glycero-3-phosphocholine + a fatty acid + H(+)</text>
        <dbReference type="Rhea" id="RHEA:15801"/>
        <dbReference type="ChEBI" id="CHEBI:15377"/>
        <dbReference type="ChEBI" id="CHEBI:15378"/>
        <dbReference type="ChEBI" id="CHEBI:28868"/>
        <dbReference type="ChEBI" id="CHEBI:57643"/>
        <dbReference type="ChEBI" id="CHEBI:58168"/>
        <dbReference type="EC" id="3.1.1.4"/>
    </reaction>
</comment>
<comment type="cofactor">
    <cofactor evidence="1">
        <name>Ca(2+)</name>
        <dbReference type="ChEBI" id="CHEBI:29108"/>
    </cofactor>
    <text evidence="1">Binds 1 Ca(2+) ion.</text>
</comment>
<comment type="subcellular location">
    <subcellularLocation>
        <location>Secreted</location>
    </subcellularLocation>
</comment>
<comment type="tissue specificity">
    <text>Expressed by the venom gland.</text>
</comment>
<comment type="similarity">
    <text evidence="5">Belongs to the phospholipase A2 family. Group I subfamily. D49 sub-subfamily.</text>
</comment>
<name>PA2B_LATLA</name>
<protein>
    <recommendedName>
        <fullName>Basic phospholipase A2 P'513</fullName>
        <shortName>svPLA2</shortName>
        <ecNumber>3.1.1.4</ecNumber>
    </recommendedName>
    <alternativeName>
        <fullName>Phosphatidylcholine 2-acylhydrolase</fullName>
    </alternativeName>
</protein>
<proteinExistence type="evidence at transcript level"/>
<feature type="signal peptide" evidence="2">
    <location>
        <begin position="1"/>
        <end position="21"/>
    </location>
</feature>
<feature type="propeptide" id="PRO_0000022886">
    <location>
        <begin position="22"/>
        <end position="27"/>
    </location>
</feature>
<feature type="chain" id="PRO_0000022887" description="Basic phospholipase A2 P'513">
    <location>
        <begin position="28"/>
        <end position="145"/>
    </location>
</feature>
<feature type="active site" evidence="1">
    <location>
        <position position="75"/>
    </location>
</feature>
<feature type="active site" evidence="1">
    <location>
        <position position="119"/>
    </location>
</feature>
<feature type="binding site" evidence="1">
    <location>
        <position position="55"/>
    </location>
    <ligand>
        <name>Ca(2+)</name>
        <dbReference type="ChEBI" id="CHEBI:29108"/>
    </ligand>
</feature>
<feature type="binding site" evidence="1">
    <location>
        <position position="57"/>
    </location>
    <ligand>
        <name>Ca(2+)</name>
        <dbReference type="ChEBI" id="CHEBI:29108"/>
    </ligand>
</feature>
<feature type="binding site" evidence="1">
    <location>
        <position position="59"/>
    </location>
    <ligand>
        <name>Ca(2+)</name>
        <dbReference type="ChEBI" id="CHEBI:29108"/>
    </ligand>
</feature>
<feature type="binding site" evidence="1">
    <location>
        <position position="76"/>
    </location>
    <ligand>
        <name>Ca(2+)</name>
        <dbReference type="ChEBI" id="CHEBI:29108"/>
    </ligand>
</feature>
<feature type="disulfide bond" evidence="1">
    <location>
        <begin position="38"/>
        <end position="98"/>
    </location>
</feature>
<feature type="disulfide bond" evidence="1">
    <location>
        <begin position="54"/>
        <end position="144"/>
    </location>
</feature>
<feature type="disulfide bond" evidence="1">
    <location>
        <begin position="56"/>
        <end position="72"/>
    </location>
</feature>
<feature type="disulfide bond" evidence="1">
    <location>
        <begin position="71"/>
        <end position="125"/>
    </location>
</feature>
<feature type="disulfide bond" evidence="1">
    <location>
        <begin position="78"/>
        <end position="118"/>
    </location>
</feature>
<feature type="disulfide bond" evidence="1">
    <location>
        <begin position="87"/>
        <end position="111"/>
    </location>
</feature>
<feature type="disulfide bond" evidence="1">
    <location>
        <begin position="105"/>
        <end position="116"/>
    </location>
</feature>
<accession>P19000</accession>
<reference key="1">
    <citation type="journal article" date="1987" name="Nucleic Acids Res.">
        <title>Sequence of a cDNA encoding a snake venom phospholipase A2.</title>
        <authorList>
            <person name="Guignery Frelat G."/>
            <person name="Ducancel F."/>
            <person name="Menez A."/>
            <person name="Boulain J.-C."/>
        </authorList>
    </citation>
    <scope>NUCLEOTIDE SEQUENCE [MRNA]</scope>
    <source>
        <tissue>Venom gland</tissue>
    </source>
</reference>
<organism>
    <name type="scientific">Laticauda laticaudata</name>
    <name type="common">Blue-ringed sea krait</name>
    <name type="synonym">Blue-lipped sea krait</name>
    <dbReference type="NCBI Taxonomy" id="8630"/>
    <lineage>
        <taxon>Eukaryota</taxon>
        <taxon>Metazoa</taxon>
        <taxon>Chordata</taxon>
        <taxon>Craniata</taxon>
        <taxon>Vertebrata</taxon>
        <taxon>Euteleostomi</taxon>
        <taxon>Lepidosauria</taxon>
        <taxon>Squamata</taxon>
        <taxon>Bifurcata</taxon>
        <taxon>Unidentata</taxon>
        <taxon>Episquamata</taxon>
        <taxon>Toxicofera</taxon>
        <taxon>Serpentes</taxon>
        <taxon>Colubroidea</taxon>
        <taxon>Elapidae</taxon>
        <taxon>Laticaudinae</taxon>
        <taxon>Laticauda</taxon>
    </lineage>
</organism>
<sequence>MYPAHLLLLLAVCVSLLGASAIPPLPLNLAQFALVIKCADKGKRPRWHYMDYGCYCGPGGSGTPVDELDRCCKTHDQCYAQAEKKGCYPKLTMYSYYCGGDGPYCNSKTECQRFVCDCDVRAADCFARYPYNNKNYNINTSKRCK</sequence>
<evidence type="ECO:0000250" key="1"/>
<evidence type="ECO:0000255" key="2"/>
<evidence type="ECO:0000255" key="3">
    <source>
        <dbReference type="PROSITE-ProRule" id="PRU10035"/>
    </source>
</evidence>
<evidence type="ECO:0000255" key="4">
    <source>
        <dbReference type="PROSITE-ProRule" id="PRU10036"/>
    </source>
</evidence>
<evidence type="ECO:0000305" key="5"/>